<keyword id="KW-0342">GTP-binding</keyword>
<keyword id="KW-0547">Nucleotide-binding</keyword>
<keyword id="KW-1185">Reference proteome</keyword>
<keyword id="KW-0677">Repeat</keyword>
<keyword id="KW-0690">Ribosome biogenesis</keyword>
<feature type="chain" id="PRO_1000077663" description="GTPase Der">
    <location>
        <begin position="1"/>
        <end position="439"/>
    </location>
</feature>
<feature type="domain" description="EngA-type G 1">
    <location>
        <begin position="2"/>
        <end position="166"/>
    </location>
</feature>
<feature type="domain" description="EngA-type G 2">
    <location>
        <begin position="176"/>
        <end position="351"/>
    </location>
</feature>
<feature type="domain" description="KH-like" evidence="1">
    <location>
        <begin position="352"/>
        <end position="436"/>
    </location>
</feature>
<feature type="binding site" evidence="1">
    <location>
        <begin position="8"/>
        <end position="15"/>
    </location>
    <ligand>
        <name>GTP</name>
        <dbReference type="ChEBI" id="CHEBI:37565"/>
        <label>1</label>
    </ligand>
</feature>
<feature type="binding site" evidence="1">
    <location>
        <begin position="55"/>
        <end position="59"/>
    </location>
    <ligand>
        <name>GTP</name>
        <dbReference type="ChEBI" id="CHEBI:37565"/>
        <label>1</label>
    </ligand>
</feature>
<feature type="binding site" evidence="1">
    <location>
        <begin position="118"/>
        <end position="121"/>
    </location>
    <ligand>
        <name>GTP</name>
        <dbReference type="ChEBI" id="CHEBI:37565"/>
        <label>1</label>
    </ligand>
</feature>
<feature type="binding site" evidence="1">
    <location>
        <begin position="182"/>
        <end position="189"/>
    </location>
    <ligand>
        <name>GTP</name>
        <dbReference type="ChEBI" id="CHEBI:37565"/>
        <label>2</label>
    </ligand>
</feature>
<feature type="binding site" evidence="1">
    <location>
        <begin position="229"/>
        <end position="233"/>
    </location>
    <ligand>
        <name>GTP</name>
        <dbReference type="ChEBI" id="CHEBI:37565"/>
        <label>2</label>
    </ligand>
</feature>
<feature type="binding site" evidence="1">
    <location>
        <begin position="294"/>
        <end position="297"/>
    </location>
    <ligand>
        <name>GTP</name>
        <dbReference type="ChEBI" id="CHEBI:37565"/>
        <label>2</label>
    </ligand>
</feature>
<evidence type="ECO:0000255" key="1">
    <source>
        <dbReference type="HAMAP-Rule" id="MF_00195"/>
    </source>
</evidence>
<comment type="function">
    <text evidence="1">GTPase that plays an essential role in the late steps of ribosome biogenesis.</text>
</comment>
<comment type="subunit">
    <text evidence="1">Associates with the 50S ribosomal subunit.</text>
</comment>
<comment type="similarity">
    <text evidence="1">Belongs to the TRAFAC class TrmE-Era-EngA-EngB-Septin-like GTPase superfamily. EngA (Der) GTPase family.</text>
</comment>
<dbReference type="EMBL" id="CP000142">
    <property type="protein sequence ID" value="ABA88652.1"/>
    <property type="molecule type" value="Genomic_DNA"/>
</dbReference>
<dbReference type="RefSeq" id="WP_011341135.1">
    <property type="nucleotide sequence ID" value="NC_007498.2"/>
</dbReference>
<dbReference type="SMR" id="Q3A4Q5"/>
<dbReference type="STRING" id="338963.Pcar_1406"/>
<dbReference type="KEGG" id="pca:Pcar_1406"/>
<dbReference type="eggNOG" id="COG1160">
    <property type="taxonomic scope" value="Bacteria"/>
</dbReference>
<dbReference type="HOGENOM" id="CLU_016077_6_2_7"/>
<dbReference type="OrthoDB" id="9805918at2"/>
<dbReference type="Proteomes" id="UP000002534">
    <property type="component" value="Chromosome"/>
</dbReference>
<dbReference type="GO" id="GO:0005525">
    <property type="term" value="F:GTP binding"/>
    <property type="evidence" value="ECO:0007669"/>
    <property type="project" value="UniProtKB-UniRule"/>
</dbReference>
<dbReference type="GO" id="GO:0043022">
    <property type="term" value="F:ribosome binding"/>
    <property type="evidence" value="ECO:0007669"/>
    <property type="project" value="TreeGrafter"/>
</dbReference>
<dbReference type="GO" id="GO:0042254">
    <property type="term" value="P:ribosome biogenesis"/>
    <property type="evidence" value="ECO:0007669"/>
    <property type="project" value="UniProtKB-KW"/>
</dbReference>
<dbReference type="CDD" id="cd01894">
    <property type="entry name" value="EngA1"/>
    <property type="match status" value="1"/>
</dbReference>
<dbReference type="CDD" id="cd01895">
    <property type="entry name" value="EngA2"/>
    <property type="match status" value="1"/>
</dbReference>
<dbReference type="FunFam" id="3.30.300.20:FF:000004">
    <property type="entry name" value="GTPase Der"/>
    <property type="match status" value="1"/>
</dbReference>
<dbReference type="FunFam" id="3.40.50.300:FF:000040">
    <property type="entry name" value="GTPase Der"/>
    <property type="match status" value="1"/>
</dbReference>
<dbReference type="FunFam" id="3.40.50.300:FF:000057">
    <property type="entry name" value="GTPase Der"/>
    <property type="match status" value="1"/>
</dbReference>
<dbReference type="Gene3D" id="3.30.300.20">
    <property type="match status" value="1"/>
</dbReference>
<dbReference type="Gene3D" id="3.40.50.300">
    <property type="entry name" value="P-loop containing nucleotide triphosphate hydrolases"/>
    <property type="match status" value="2"/>
</dbReference>
<dbReference type="HAMAP" id="MF_00195">
    <property type="entry name" value="GTPase_Der"/>
    <property type="match status" value="1"/>
</dbReference>
<dbReference type="InterPro" id="IPR031166">
    <property type="entry name" value="G_ENGA"/>
</dbReference>
<dbReference type="InterPro" id="IPR006073">
    <property type="entry name" value="GTP-bd"/>
</dbReference>
<dbReference type="InterPro" id="IPR016484">
    <property type="entry name" value="GTPase_Der"/>
</dbReference>
<dbReference type="InterPro" id="IPR032859">
    <property type="entry name" value="KH_dom-like"/>
</dbReference>
<dbReference type="InterPro" id="IPR015946">
    <property type="entry name" value="KH_dom-like_a/b"/>
</dbReference>
<dbReference type="InterPro" id="IPR027417">
    <property type="entry name" value="P-loop_NTPase"/>
</dbReference>
<dbReference type="InterPro" id="IPR005225">
    <property type="entry name" value="Small_GTP-bd"/>
</dbReference>
<dbReference type="NCBIfam" id="TIGR03594">
    <property type="entry name" value="GTPase_EngA"/>
    <property type="match status" value="1"/>
</dbReference>
<dbReference type="NCBIfam" id="TIGR00231">
    <property type="entry name" value="small_GTP"/>
    <property type="match status" value="2"/>
</dbReference>
<dbReference type="PANTHER" id="PTHR43834">
    <property type="entry name" value="GTPASE DER"/>
    <property type="match status" value="1"/>
</dbReference>
<dbReference type="PANTHER" id="PTHR43834:SF6">
    <property type="entry name" value="GTPASE DER"/>
    <property type="match status" value="1"/>
</dbReference>
<dbReference type="Pfam" id="PF14714">
    <property type="entry name" value="KH_dom-like"/>
    <property type="match status" value="1"/>
</dbReference>
<dbReference type="Pfam" id="PF01926">
    <property type="entry name" value="MMR_HSR1"/>
    <property type="match status" value="2"/>
</dbReference>
<dbReference type="PIRSF" id="PIRSF006485">
    <property type="entry name" value="GTP-binding_EngA"/>
    <property type="match status" value="1"/>
</dbReference>
<dbReference type="PRINTS" id="PR00326">
    <property type="entry name" value="GTP1OBG"/>
</dbReference>
<dbReference type="SUPFAM" id="SSF52540">
    <property type="entry name" value="P-loop containing nucleoside triphosphate hydrolases"/>
    <property type="match status" value="2"/>
</dbReference>
<dbReference type="PROSITE" id="PS51712">
    <property type="entry name" value="G_ENGA"/>
    <property type="match status" value="2"/>
</dbReference>
<protein>
    <recommendedName>
        <fullName evidence="1">GTPase Der</fullName>
    </recommendedName>
    <alternativeName>
        <fullName evidence="1">GTP-binding protein EngA</fullName>
    </alternativeName>
</protein>
<proteinExistence type="inferred from homology"/>
<name>DER_SYNC1</name>
<gene>
    <name evidence="1" type="primary">der</name>
    <name type="synonym">engA</name>
    <name type="ordered locus">Pcar_1406</name>
</gene>
<organism>
    <name type="scientific">Syntrophotalea carbinolica (strain DSM 2380 / NBRC 103641 / GraBd1)</name>
    <name type="common">Pelobacter carbinolicus</name>
    <dbReference type="NCBI Taxonomy" id="338963"/>
    <lineage>
        <taxon>Bacteria</taxon>
        <taxon>Pseudomonadati</taxon>
        <taxon>Thermodesulfobacteriota</taxon>
        <taxon>Desulfuromonadia</taxon>
        <taxon>Desulfuromonadales</taxon>
        <taxon>Syntrophotaleaceae</taxon>
        <taxon>Syntrophotalea</taxon>
    </lineage>
</organism>
<reference key="1">
    <citation type="submission" date="2005-10" db="EMBL/GenBank/DDBJ databases">
        <title>Complete sequence of Pelobacter carbinolicus DSM 2380.</title>
        <authorList>
            <person name="Copeland A."/>
            <person name="Lucas S."/>
            <person name="Lapidus A."/>
            <person name="Barry K."/>
            <person name="Detter J.C."/>
            <person name="Glavina T."/>
            <person name="Hammon N."/>
            <person name="Israni S."/>
            <person name="Pitluck S."/>
            <person name="Chertkov O."/>
            <person name="Schmutz J."/>
            <person name="Larimer F."/>
            <person name="Land M."/>
            <person name="Kyrpides N."/>
            <person name="Ivanova N."/>
            <person name="Richardson P."/>
        </authorList>
    </citation>
    <scope>NUCLEOTIDE SEQUENCE [LARGE SCALE GENOMIC DNA]</scope>
    <source>
        <strain>DSM 2380 / NBRC 103641 / GraBd1</strain>
    </source>
</reference>
<accession>Q3A4Q5</accession>
<sequence length="439" mass="48712">MSVVAIVGRPNVGKSTLFNRILGTRRAIVEDYPGVTRDRNYAQVTRYGTPFVLIDTGGFEPASQNRLLKQMREQSELAVEEADVILFVVDAKEGLTPSDDEVAGMLRRSGKPVLYVVNKVDGDSHEAAASEFYALGVDQLYTVSAEHGRGMDDLMAAVLAALPAPAKLDARSCEETRLAVIGRPNVGKSSLINRMIGVERLVANPTAGTTRDSIDTPFVYNKKSYVLIDTAGIRRKGRVQQKLEKYSVIQSLKAMERAHVVLVVIDAEEGVTEQDLTVAGYALERGRAVLLVVNKWDLVTKDHGTMKQYTEKVRHAFKFLPFAPIIFVSALSGQRVSKIMAEVEKVAIEFNRQVPTGVLNRVLEEAVLSHAPPMVQGKRLKFYYMTQTGVRPPSFVVFGNRATGVHFSYERYLSNKLREAFGFSGCPIRLKFKDRNARE</sequence>